<accession>Q6AQ14</accession>
<protein>
    <recommendedName>
        <fullName evidence="1">ATP synthase subunit b</fullName>
    </recommendedName>
    <alternativeName>
        <fullName evidence="1">ATP synthase F(0) sector subunit b</fullName>
    </alternativeName>
    <alternativeName>
        <fullName evidence="1">ATPase subunit I</fullName>
    </alternativeName>
    <alternativeName>
        <fullName evidence="1">F-type ATPase subunit b</fullName>
        <shortName evidence="1">F-ATPase subunit b</shortName>
    </alternativeName>
</protein>
<organism>
    <name type="scientific">Desulfotalea psychrophila (strain LSv54 / DSM 12343)</name>
    <dbReference type="NCBI Taxonomy" id="177439"/>
    <lineage>
        <taxon>Bacteria</taxon>
        <taxon>Pseudomonadati</taxon>
        <taxon>Thermodesulfobacteriota</taxon>
        <taxon>Desulfobulbia</taxon>
        <taxon>Desulfobulbales</taxon>
        <taxon>Desulfocapsaceae</taxon>
        <taxon>Desulfotalea</taxon>
    </lineage>
</organism>
<dbReference type="EMBL" id="CR522870">
    <property type="protein sequence ID" value="CAG35559.1"/>
    <property type="molecule type" value="Genomic_DNA"/>
</dbReference>
<dbReference type="RefSeq" id="WP_011188075.1">
    <property type="nucleotide sequence ID" value="NC_006138.1"/>
</dbReference>
<dbReference type="SMR" id="Q6AQ14"/>
<dbReference type="STRING" id="177439.DP0830"/>
<dbReference type="KEGG" id="dps:DP0830"/>
<dbReference type="eggNOG" id="COG0711">
    <property type="taxonomic scope" value="Bacteria"/>
</dbReference>
<dbReference type="HOGENOM" id="CLU_079215_3_0_7"/>
<dbReference type="OrthoDB" id="5471016at2"/>
<dbReference type="Proteomes" id="UP000000602">
    <property type="component" value="Chromosome"/>
</dbReference>
<dbReference type="GO" id="GO:0005886">
    <property type="term" value="C:plasma membrane"/>
    <property type="evidence" value="ECO:0007669"/>
    <property type="project" value="UniProtKB-SubCell"/>
</dbReference>
<dbReference type="GO" id="GO:0045259">
    <property type="term" value="C:proton-transporting ATP synthase complex"/>
    <property type="evidence" value="ECO:0007669"/>
    <property type="project" value="UniProtKB-KW"/>
</dbReference>
<dbReference type="GO" id="GO:0046933">
    <property type="term" value="F:proton-transporting ATP synthase activity, rotational mechanism"/>
    <property type="evidence" value="ECO:0007669"/>
    <property type="project" value="UniProtKB-UniRule"/>
</dbReference>
<dbReference type="CDD" id="cd06503">
    <property type="entry name" value="ATP-synt_Fo_b"/>
    <property type="match status" value="1"/>
</dbReference>
<dbReference type="HAMAP" id="MF_01398">
    <property type="entry name" value="ATP_synth_b_bprime"/>
    <property type="match status" value="1"/>
</dbReference>
<dbReference type="InterPro" id="IPR002146">
    <property type="entry name" value="ATP_synth_b/b'su_bac/chlpt"/>
</dbReference>
<dbReference type="PANTHER" id="PTHR34264">
    <property type="entry name" value="ATP SYNTHASE SUBUNIT B, CHLOROPLASTIC"/>
    <property type="match status" value="1"/>
</dbReference>
<dbReference type="PANTHER" id="PTHR34264:SF3">
    <property type="entry name" value="ATP SYNTHASE SUBUNIT B, CHLOROPLASTIC"/>
    <property type="match status" value="1"/>
</dbReference>
<dbReference type="Pfam" id="PF00430">
    <property type="entry name" value="ATP-synt_B"/>
    <property type="match status" value="1"/>
</dbReference>
<evidence type="ECO:0000255" key="1">
    <source>
        <dbReference type="HAMAP-Rule" id="MF_01398"/>
    </source>
</evidence>
<keyword id="KW-0066">ATP synthesis</keyword>
<keyword id="KW-0997">Cell inner membrane</keyword>
<keyword id="KW-1003">Cell membrane</keyword>
<keyword id="KW-0138">CF(0)</keyword>
<keyword id="KW-0375">Hydrogen ion transport</keyword>
<keyword id="KW-0406">Ion transport</keyword>
<keyword id="KW-0472">Membrane</keyword>
<keyword id="KW-1185">Reference proteome</keyword>
<keyword id="KW-0812">Transmembrane</keyword>
<keyword id="KW-1133">Transmembrane helix</keyword>
<keyword id="KW-0813">Transport</keyword>
<feature type="chain" id="PRO_0000368460" description="ATP synthase subunit b">
    <location>
        <begin position="1"/>
        <end position="242"/>
    </location>
</feature>
<feature type="transmembrane region" description="Helical" evidence="1">
    <location>
        <begin position="8"/>
        <end position="28"/>
    </location>
</feature>
<feature type="transmembrane region" description="Helical" evidence="1">
    <location>
        <begin position="87"/>
        <end position="107"/>
    </location>
</feature>
<proteinExistence type="inferred from homology"/>
<comment type="function">
    <text evidence="1">F(1)F(0) ATP synthase produces ATP from ADP in the presence of a proton or sodium gradient. F-type ATPases consist of two structural domains, F(1) containing the extramembraneous catalytic core and F(0) containing the membrane proton channel, linked together by a central stalk and a peripheral stalk. During catalysis, ATP synthesis in the catalytic domain of F(1) is coupled via a rotary mechanism of the central stalk subunits to proton translocation.</text>
</comment>
<comment type="function">
    <text evidence="1">Component of the F(0) channel, it forms part of the peripheral stalk, linking F(1) to F(0).</text>
</comment>
<comment type="subunit">
    <text evidence="1">F-type ATPases have 2 components, F(1) - the catalytic core - and F(0) - the membrane proton channel. F(1) has five subunits: alpha(3), beta(3), gamma(1), delta(1), epsilon(1). F(0) has three main subunits: a(1), b(2) and c(10-14). The alpha and beta chains form an alternating ring which encloses part of the gamma chain. F(1) is attached to F(0) by a central stalk formed by the gamma and epsilon chains, while a peripheral stalk is formed by the delta and b chains.</text>
</comment>
<comment type="subcellular location">
    <subcellularLocation>
        <location evidence="1">Cell inner membrane</location>
        <topology evidence="1">Multi-pass membrane protein</topology>
    </subcellularLocation>
</comment>
<comment type="similarity">
    <text evidence="1">Belongs to the ATPase B chain family.</text>
</comment>
<name>ATPF_DESPS</name>
<reference key="1">
    <citation type="journal article" date="2004" name="Environ. Microbiol.">
        <title>The genome of Desulfotalea psychrophila, a sulfate-reducing bacterium from permanently cold Arctic sediments.</title>
        <authorList>
            <person name="Rabus R."/>
            <person name="Ruepp A."/>
            <person name="Frickey T."/>
            <person name="Rattei T."/>
            <person name="Fartmann B."/>
            <person name="Stark M."/>
            <person name="Bauer M."/>
            <person name="Zibat A."/>
            <person name="Lombardot T."/>
            <person name="Becker I."/>
            <person name="Amann J."/>
            <person name="Gellner K."/>
            <person name="Teeling H."/>
            <person name="Leuschner W.D."/>
            <person name="Gloeckner F.-O."/>
            <person name="Lupas A.N."/>
            <person name="Amann R."/>
            <person name="Klenk H.-P."/>
        </authorList>
    </citation>
    <scope>NUCLEOTIDE SEQUENCE [LARGE SCALE GENOMIC DNA]</scope>
    <source>
        <strain>DSM 12343 / LSv54</strain>
    </source>
</reference>
<gene>
    <name evidence="1" type="primary">atpF</name>
    <name type="ordered locus">DP0830</name>
</gene>
<sequence length="242" mass="26024">MKENIKRVLPFLLVLLFAFAPLALASAPVDAPAPADAPADALPSAKVISAPADAGVIEAVELEHATVTGAHDVAVAHVADSLSHEKLMDLFWRVLNFAVLMAILIKFGAKPIANALSGRQQRVKSEVEDLEARRIVAEKEFRQFEAKLANVEKDIDSIVDKAVAQAEIEKAKILERAEQAAADIQKSAEQAIQNEIANAKRSLKNDAADQAAVMAEELIVKHLTADDQVKIVEDYLAKVGAV</sequence>